<reference key="1">
    <citation type="journal article" date="2006" name="Proc. Natl. Acad. Sci. U.S.A.">
        <title>The complete genome of Rhodococcus sp. RHA1 provides insights into a catabolic powerhouse.</title>
        <authorList>
            <person name="McLeod M.P."/>
            <person name="Warren R.L."/>
            <person name="Hsiao W.W.L."/>
            <person name="Araki N."/>
            <person name="Myhre M."/>
            <person name="Fernandes C."/>
            <person name="Miyazawa D."/>
            <person name="Wong W."/>
            <person name="Lillquist A.L."/>
            <person name="Wang D."/>
            <person name="Dosanjh M."/>
            <person name="Hara H."/>
            <person name="Petrescu A."/>
            <person name="Morin R.D."/>
            <person name="Yang G."/>
            <person name="Stott J.M."/>
            <person name="Schein J.E."/>
            <person name="Shin H."/>
            <person name="Smailus D."/>
            <person name="Siddiqui A.S."/>
            <person name="Marra M.A."/>
            <person name="Jones S.J.M."/>
            <person name="Holt R."/>
            <person name="Brinkman F.S.L."/>
            <person name="Miyauchi K."/>
            <person name="Fukuda M."/>
            <person name="Davies J.E."/>
            <person name="Mohn W.W."/>
            <person name="Eltis L.D."/>
        </authorList>
    </citation>
    <scope>NUCLEOTIDE SEQUENCE [LARGE SCALE GENOMIC DNA]</scope>
    <source>
        <strain>RHA1</strain>
    </source>
</reference>
<name>ATPA_RHOJR</name>
<dbReference type="EC" id="7.1.2.2" evidence="1"/>
<dbReference type="EMBL" id="CP000431">
    <property type="protein sequence ID" value="ABG93289.1"/>
    <property type="molecule type" value="Genomic_DNA"/>
</dbReference>
<dbReference type="RefSeq" id="WP_005252958.1">
    <property type="nucleotide sequence ID" value="NC_008268.1"/>
</dbReference>
<dbReference type="SMR" id="Q0SGP7"/>
<dbReference type="GeneID" id="69893147"/>
<dbReference type="KEGG" id="rha:RHA1_ro01474"/>
<dbReference type="eggNOG" id="COG0056">
    <property type="taxonomic scope" value="Bacteria"/>
</dbReference>
<dbReference type="HOGENOM" id="CLU_010091_2_1_11"/>
<dbReference type="OrthoDB" id="9803053at2"/>
<dbReference type="Proteomes" id="UP000008710">
    <property type="component" value="Chromosome"/>
</dbReference>
<dbReference type="GO" id="GO:0005886">
    <property type="term" value="C:plasma membrane"/>
    <property type="evidence" value="ECO:0007669"/>
    <property type="project" value="UniProtKB-SubCell"/>
</dbReference>
<dbReference type="GO" id="GO:0045259">
    <property type="term" value="C:proton-transporting ATP synthase complex"/>
    <property type="evidence" value="ECO:0007669"/>
    <property type="project" value="UniProtKB-KW"/>
</dbReference>
<dbReference type="GO" id="GO:0043531">
    <property type="term" value="F:ADP binding"/>
    <property type="evidence" value="ECO:0007669"/>
    <property type="project" value="TreeGrafter"/>
</dbReference>
<dbReference type="GO" id="GO:0005524">
    <property type="term" value="F:ATP binding"/>
    <property type="evidence" value="ECO:0007669"/>
    <property type="project" value="UniProtKB-UniRule"/>
</dbReference>
<dbReference type="GO" id="GO:0046933">
    <property type="term" value="F:proton-transporting ATP synthase activity, rotational mechanism"/>
    <property type="evidence" value="ECO:0007669"/>
    <property type="project" value="UniProtKB-UniRule"/>
</dbReference>
<dbReference type="CDD" id="cd18113">
    <property type="entry name" value="ATP-synt_F1_alpha_C"/>
    <property type="match status" value="1"/>
</dbReference>
<dbReference type="CDD" id="cd18116">
    <property type="entry name" value="ATP-synt_F1_alpha_N"/>
    <property type="match status" value="1"/>
</dbReference>
<dbReference type="CDD" id="cd01132">
    <property type="entry name" value="F1-ATPase_alpha_CD"/>
    <property type="match status" value="1"/>
</dbReference>
<dbReference type="FunFam" id="1.20.150.20:FF:000001">
    <property type="entry name" value="ATP synthase subunit alpha"/>
    <property type="match status" value="1"/>
</dbReference>
<dbReference type="FunFam" id="3.40.50.300:FF:000002">
    <property type="entry name" value="ATP synthase subunit alpha"/>
    <property type="match status" value="1"/>
</dbReference>
<dbReference type="Gene3D" id="2.40.30.20">
    <property type="match status" value="1"/>
</dbReference>
<dbReference type="Gene3D" id="1.20.150.20">
    <property type="entry name" value="ATP synthase alpha/beta chain, C-terminal domain"/>
    <property type="match status" value="1"/>
</dbReference>
<dbReference type="Gene3D" id="3.40.50.300">
    <property type="entry name" value="P-loop containing nucleotide triphosphate hydrolases"/>
    <property type="match status" value="1"/>
</dbReference>
<dbReference type="HAMAP" id="MF_01346">
    <property type="entry name" value="ATP_synth_alpha_bact"/>
    <property type="match status" value="1"/>
</dbReference>
<dbReference type="InterPro" id="IPR023366">
    <property type="entry name" value="ATP_synth_asu-like_sf"/>
</dbReference>
<dbReference type="InterPro" id="IPR000793">
    <property type="entry name" value="ATP_synth_asu_C"/>
</dbReference>
<dbReference type="InterPro" id="IPR038376">
    <property type="entry name" value="ATP_synth_asu_C_sf"/>
</dbReference>
<dbReference type="InterPro" id="IPR033732">
    <property type="entry name" value="ATP_synth_F1_a_nt-bd_dom"/>
</dbReference>
<dbReference type="InterPro" id="IPR005294">
    <property type="entry name" value="ATP_synth_F1_asu"/>
</dbReference>
<dbReference type="InterPro" id="IPR020003">
    <property type="entry name" value="ATPase_a/bsu_AS"/>
</dbReference>
<dbReference type="InterPro" id="IPR004100">
    <property type="entry name" value="ATPase_F1/V1/A1_a/bsu_N"/>
</dbReference>
<dbReference type="InterPro" id="IPR036121">
    <property type="entry name" value="ATPase_F1/V1/A1_a/bsu_N_sf"/>
</dbReference>
<dbReference type="InterPro" id="IPR000194">
    <property type="entry name" value="ATPase_F1/V1/A1_a/bsu_nucl-bd"/>
</dbReference>
<dbReference type="InterPro" id="IPR027417">
    <property type="entry name" value="P-loop_NTPase"/>
</dbReference>
<dbReference type="NCBIfam" id="TIGR00962">
    <property type="entry name" value="atpA"/>
    <property type="match status" value="1"/>
</dbReference>
<dbReference type="NCBIfam" id="NF009884">
    <property type="entry name" value="PRK13343.1"/>
    <property type="match status" value="1"/>
</dbReference>
<dbReference type="PANTHER" id="PTHR48082">
    <property type="entry name" value="ATP SYNTHASE SUBUNIT ALPHA, MITOCHONDRIAL"/>
    <property type="match status" value="1"/>
</dbReference>
<dbReference type="PANTHER" id="PTHR48082:SF2">
    <property type="entry name" value="ATP SYNTHASE SUBUNIT ALPHA, MITOCHONDRIAL"/>
    <property type="match status" value="1"/>
</dbReference>
<dbReference type="Pfam" id="PF00006">
    <property type="entry name" value="ATP-synt_ab"/>
    <property type="match status" value="1"/>
</dbReference>
<dbReference type="Pfam" id="PF00306">
    <property type="entry name" value="ATP-synt_ab_C"/>
    <property type="match status" value="1"/>
</dbReference>
<dbReference type="Pfam" id="PF02874">
    <property type="entry name" value="ATP-synt_ab_N"/>
    <property type="match status" value="1"/>
</dbReference>
<dbReference type="SUPFAM" id="SSF47917">
    <property type="entry name" value="C-terminal domain of alpha and beta subunits of F1 ATP synthase"/>
    <property type="match status" value="1"/>
</dbReference>
<dbReference type="SUPFAM" id="SSF50615">
    <property type="entry name" value="N-terminal domain of alpha and beta subunits of F1 ATP synthase"/>
    <property type="match status" value="1"/>
</dbReference>
<dbReference type="SUPFAM" id="SSF52540">
    <property type="entry name" value="P-loop containing nucleoside triphosphate hydrolases"/>
    <property type="match status" value="1"/>
</dbReference>
<dbReference type="PROSITE" id="PS00152">
    <property type="entry name" value="ATPASE_ALPHA_BETA"/>
    <property type="match status" value="1"/>
</dbReference>
<evidence type="ECO:0000255" key="1">
    <source>
        <dbReference type="HAMAP-Rule" id="MF_01346"/>
    </source>
</evidence>
<organism>
    <name type="scientific">Rhodococcus jostii (strain RHA1)</name>
    <dbReference type="NCBI Taxonomy" id="101510"/>
    <lineage>
        <taxon>Bacteria</taxon>
        <taxon>Bacillati</taxon>
        <taxon>Actinomycetota</taxon>
        <taxon>Actinomycetes</taxon>
        <taxon>Mycobacteriales</taxon>
        <taxon>Nocardiaceae</taxon>
        <taxon>Rhodococcus</taxon>
    </lineage>
</organism>
<comment type="function">
    <text evidence="1">Produces ATP from ADP in the presence of a proton gradient across the membrane. The alpha chain is a regulatory subunit.</text>
</comment>
<comment type="catalytic activity">
    <reaction evidence="1">
        <text>ATP + H2O + 4 H(+)(in) = ADP + phosphate + 5 H(+)(out)</text>
        <dbReference type="Rhea" id="RHEA:57720"/>
        <dbReference type="ChEBI" id="CHEBI:15377"/>
        <dbReference type="ChEBI" id="CHEBI:15378"/>
        <dbReference type="ChEBI" id="CHEBI:30616"/>
        <dbReference type="ChEBI" id="CHEBI:43474"/>
        <dbReference type="ChEBI" id="CHEBI:456216"/>
        <dbReference type="EC" id="7.1.2.2"/>
    </reaction>
</comment>
<comment type="subunit">
    <text evidence="1">F-type ATPases have 2 components, CF(1) - the catalytic core - and CF(0) - the membrane proton channel. CF(1) has five subunits: alpha(3), beta(3), gamma(1), delta(1), epsilon(1). CF(0) has three main subunits: a(1), b(2) and c(9-12). The alpha and beta chains form an alternating ring which encloses part of the gamma chain. CF(1) is attached to CF(0) by a central stalk formed by the gamma and epsilon chains, while a peripheral stalk is formed by the delta and b chains.</text>
</comment>
<comment type="subcellular location">
    <subcellularLocation>
        <location evidence="1">Cell membrane</location>
        <topology evidence="1">Peripheral membrane protein</topology>
    </subcellularLocation>
</comment>
<comment type="similarity">
    <text evidence="1">Belongs to the ATPase alpha/beta chains family.</text>
</comment>
<gene>
    <name evidence="1" type="primary">atpA</name>
    <name type="ordered locus">RHA1_ro01474</name>
</gene>
<keyword id="KW-0066">ATP synthesis</keyword>
<keyword id="KW-0067">ATP-binding</keyword>
<keyword id="KW-1003">Cell membrane</keyword>
<keyword id="KW-0139">CF(1)</keyword>
<keyword id="KW-0375">Hydrogen ion transport</keyword>
<keyword id="KW-0406">Ion transport</keyword>
<keyword id="KW-0472">Membrane</keyword>
<keyword id="KW-0547">Nucleotide-binding</keyword>
<keyword id="KW-1278">Translocase</keyword>
<keyword id="KW-0813">Transport</keyword>
<protein>
    <recommendedName>
        <fullName evidence="1">ATP synthase subunit alpha</fullName>
        <ecNumber evidence="1">7.1.2.2</ecNumber>
    </recommendedName>
    <alternativeName>
        <fullName evidence="1">ATP synthase F1 sector subunit alpha</fullName>
    </alternativeName>
    <alternativeName>
        <fullName evidence="1">F-ATPase subunit alpha</fullName>
    </alternativeName>
</protein>
<feature type="chain" id="PRO_0000256104" description="ATP synthase subunit alpha">
    <location>
        <begin position="1"/>
        <end position="547"/>
    </location>
</feature>
<feature type="binding site" evidence="1">
    <location>
        <begin position="172"/>
        <end position="179"/>
    </location>
    <ligand>
        <name>ATP</name>
        <dbReference type="ChEBI" id="CHEBI:30616"/>
    </ligand>
</feature>
<feature type="site" description="Required for activity" evidence="1">
    <location>
        <position position="373"/>
    </location>
</feature>
<sequence length="547" mass="58488">MAELTISSDEIRSAIENYTASYSPEASREEVGLVTDTSDGIAHVSGLPSAMANELLEFPGGILGVALNLDATEIGAVILGDYENIQEGQEVKRTGDVLSVPVGDAFLGRVINPLGQPIDGLGEIESNETRALELQAASVLERQPVEEPLQTGIKAIDAMTPIGRGQRQLVIGDRKTGKTAVCIDAILNQKANWETGDEKQQVRCIYVAIGQKGSTIAGVKAALEEQGAMEYTTIVAAPASDSAGFKWLAPYTGSAIGQHWMYQGKHVLVVFDDLTKQAEAYRAISLLLRRPPGREAYPGDVFYLHSRLLERSAKLSDALGGGSLTALPIIETKANDVSAYIPTNVISITDGQVFLESDLFNKGVRPAINVGISVSRVGGAAQTKGMKKVSGSLRLELAQFRELEAFSAFASDLDAASKAQLERGARLVELLKQDQYSPIPVEDQIVSIYLAGEGVFDSVPVGDVRRFEAELLDELHRTASGVYESIKGGKALDADNAKALVEATDKFKETFIASDGSRVVNEAEAEALDAGEVGHEQINVKRTTVSK</sequence>
<accession>Q0SGP7</accession>
<proteinExistence type="inferred from homology"/>